<gene>
    <name evidence="1" type="primary">trmD</name>
    <name type="ordered locus">Aave_1886</name>
</gene>
<reference key="1">
    <citation type="submission" date="2006-12" db="EMBL/GenBank/DDBJ databases">
        <title>Complete sequence of Acidovorax avenae subsp. citrulli AAC00-1.</title>
        <authorList>
            <person name="Copeland A."/>
            <person name="Lucas S."/>
            <person name="Lapidus A."/>
            <person name="Barry K."/>
            <person name="Detter J.C."/>
            <person name="Glavina del Rio T."/>
            <person name="Dalin E."/>
            <person name="Tice H."/>
            <person name="Pitluck S."/>
            <person name="Kiss H."/>
            <person name="Brettin T."/>
            <person name="Bruce D."/>
            <person name="Han C."/>
            <person name="Tapia R."/>
            <person name="Gilna P."/>
            <person name="Schmutz J."/>
            <person name="Larimer F."/>
            <person name="Land M."/>
            <person name="Hauser L."/>
            <person name="Kyrpides N."/>
            <person name="Kim E."/>
            <person name="Stahl D."/>
            <person name="Richardson P."/>
        </authorList>
    </citation>
    <scope>NUCLEOTIDE SEQUENCE [LARGE SCALE GENOMIC DNA]</scope>
    <source>
        <strain>AAC00-1</strain>
    </source>
</reference>
<dbReference type="EC" id="2.1.1.228" evidence="1"/>
<dbReference type="EMBL" id="CP000512">
    <property type="protein sequence ID" value="ABM32470.1"/>
    <property type="molecule type" value="Genomic_DNA"/>
</dbReference>
<dbReference type="RefSeq" id="WP_011795015.1">
    <property type="nucleotide sequence ID" value="NC_008752.1"/>
</dbReference>
<dbReference type="SMR" id="A1TND2"/>
<dbReference type="STRING" id="397945.Aave_1886"/>
<dbReference type="KEGG" id="aav:Aave_1886"/>
<dbReference type="eggNOG" id="COG0336">
    <property type="taxonomic scope" value="Bacteria"/>
</dbReference>
<dbReference type="HOGENOM" id="CLU_047363_0_1_4"/>
<dbReference type="OrthoDB" id="9807416at2"/>
<dbReference type="Proteomes" id="UP000002596">
    <property type="component" value="Chromosome"/>
</dbReference>
<dbReference type="GO" id="GO:0005829">
    <property type="term" value="C:cytosol"/>
    <property type="evidence" value="ECO:0007669"/>
    <property type="project" value="TreeGrafter"/>
</dbReference>
<dbReference type="GO" id="GO:0052906">
    <property type="term" value="F:tRNA (guanine(37)-N1)-methyltransferase activity"/>
    <property type="evidence" value="ECO:0007669"/>
    <property type="project" value="UniProtKB-UniRule"/>
</dbReference>
<dbReference type="GO" id="GO:0002939">
    <property type="term" value="P:tRNA N1-guanine methylation"/>
    <property type="evidence" value="ECO:0007669"/>
    <property type="project" value="TreeGrafter"/>
</dbReference>
<dbReference type="CDD" id="cd18080">
    <property type="entry name" value="TrmD-like"/>
    <property type="match status" value="1"/>
</dbReference>
<dbReference type="FunFam" id="3.40.1280.10:FF:000001">
    <property type="entry name" value="tRNA (guanine-N(1)-)-methyltransferase"/>
    <property type="match status" value="1"/>
</dbReference>
<dbReference type="Gene3D" id="3.40.1280.10">
    <property type="match status" value="1"/>
</dbReference>
<dbReference type="Gene3D" id="1.10.1270.20">
    <property type="entry name" value="tRNA(m1g37)methyltransferase, domain 2"/>
    <property type="match status" value="1"/>
</dbReference>
<dbReference type="HAMAP" id="MF_00605">
    <property type="entry name" value="TrmD"/>
    <property type="match status" value="1"/>
</dbReference>
<dbReference type="InterPro" id="IPR029028">
    <property type="entry name" value="Alpha/beta_knot_MTases"/>
</dbReference>
<dbReference type="InterPro" id="IPR023148">
    <property type="entry name" value="tRNA_m1G_MeTrfase_C_sf"/>
</dbReference>
<dbReference type="InterPro" id="IPR002649">
    <property type="entry name" value="tRNA_m1G_MeTrfase_TrmD"/>
</dbReference>
<dbReference type="InterPro" id="IPR029026">
    <property type="entry name" value="tRNA_m1G_MTases_N"/>
</dbReference>
<dbReference type="InterPro" id="IPR016009">
    <property type="entry name" value="tRNA_MeTrfase_TRMD/TRM10"/>
</dbReference>
<dbReference type="NCBIfam" id="NF000648">
    <property type="entry name" value="PRK00026.1"/>
    <property type="match status" value="1"/>
</dbReference>
<dbReference type="NCBIfam" id="TIGR00088">
    <property type="entry name" value="trmD"/>
    <property type="match status" value="1"/>
</dbReference>
<dbReference type="PANTHER" id="PTHR46417">
    <property type="entry name" value="TRNA (GUANINE-N(1)-)-METHYLTRANSFERASE"/>
    <property type="match status" value="1"/>
</dbReference>
<dbReference type="PANTHER" id="PTHR46417:SF1">
    <property type="entry name" value="TRNA (GUANINE-N(1)-)-METHYLTRANSFERASE"/>
    <property type="match status" value="1"/>
</dbReference>
<dbReference type="Pfam" id="PF01746">
    <property type="entry name" value="tRNA_m1G_MT"/>
    <property type="match status" value="1"/>
</dbReference>
<dbReference type="PIRSF" id="PIRSF000386">
    <property type="entry name" value="tRNA_mtase"/>
    <property type="match status" value="1"/>
</dbReference>
<dbReference type="SUPFAM" id="SSF75217">
    <property type="entry name" value="alpha/beta knot"/>
    <property type="match status" value="1"/>
</dbReference>
<evidence type="ECO:0000255" key="1">
    <source>
        <dbReference type="HAMAP-Rule" id="MF_00605"/>
    </source>
</evidence>
<keyword id="KW-0963">Cytoplasm</keyword>
<keyword id="KW-0489">Methyltransferase</keyword>
<keyword id="KW-0949">S-adenosyl-L-methionine</keyword>
<keyword id="KW-0808">Transferase</keyword>
<keyword id="KW-0819">tRNA processing</keyword>
<protein>
    <recommendedName>
        <fullName evidence="1">tRNA (guanine-N(1)-)-methyltransferase</fullName>
        <ecNumber evidence="1">2.1.1.228</ecNumber>
    </recommendedName>
    <alternativeName>
        <fullName evidence="1">M1G-methyltransferase</fullName>
    </alternativeName>
    <alternativeName>
        <fullName evidence="1">tRNA [GM37] methyltransferase</fullName>
    </alternativeName>
</protein>
<accession>A1TND2</accession>
<proteinExistence type="inferred from homology"/>
<organism>
    <name type="scientific">Paracidovorax citrulli (strain AAC00-1)</name>
    <name type="common">Acidovorax citrulli</name>
    <dbReference type="NCBI Taxonomy" id="397945"/>
    <lineage>
        <taxon>Bacteria</taxon>
        <taxon>Pseudomonadati</taxon>
        <taxon>Pseudomonadota</taxon>
        <taxon>Betaproteobacteria</taxon>
        <taxon>Burkholderiales</taxon>
        <taxon>Comamonadaceae</taxon>
        <taxon>Paracidovorax</taxon>
    </lineage>
</organism>
<feature type="chain" id="PRO_1000006441" description="tRNA (guanine-N(1)-)-methyltransferase">
    <location>
        <begin position="1"/>
        <end position="255"/>
    </location>
</feature>
<feature type="binding site" evidence="1">
    <location>
        <position position="117"/>
    </location>
    <ligand>
        <name>S-adenosyl-L-methionine</name>
        <dbReference type="ChEBI" id="CHEBI:59789"/>
    </ligand>
</feature>
<feature type="binding site" evidence="1">
    <location>
        <begin position="137"/>
        <end position="142"/>
    </location>
    <ligand>
        <name>S-adenosyl-L-methionine</name>
        <dbReference type="ChEBI" id="CHEBI:59789"/>
    </ligand>
</feature>
<sequence>MRFDVITLFPELFTPFLASGVTRRAYATGLVDVRFWNPRDYAEGNYRRVDDRPFGGGPGMVMMAEPLERCLRAIRADRGEAPEAVAPLVMFSPIGRRLDHDGVAGWAAGNGAVLLCGRYEGVDQRFVDAHVDVQLSLGDFVLSGGEIPAMALLDAVARLQPGVLNDAGSHQEDSFNAALDGLLDCPHYTRPESWQGQAVPAALLSGHHAQIERWRRDQRLAVTARHRPDLVEAARVAGRLDRADEAVLAKLNGLL</sequence>
<comment type="function">
    <text evidence="1">Specifically methylates guanosine-37 in various tRNAs.</text>
</comment>
<comment type="catalytic activity">
    <reaction evidence="1">
        <text>guanosine(37) in tRNA + S-adenosyl-L-methionine = N(1)-methylguanosine(37) in tRNA + S-adenosyl-L-homocysteine + H(+)</text>
        <dbReference type="Rhea" id="RHEA:36899"/>
        <dbReference type="Rhea" id="RHEA-COMP:10145"/>
        <dbReference type="Rhea" id="RHEA-COMP:10147"/>
        <dbReference type="ChEBI" id="CHEBI:15378"/>
        <dbReference type="ChEBI" id="CHEBI:57856"/>
        <dbReference type="ChEBI" id="CHEBI:59789"/>
        <dbReference type="ChEBI" id="CHEBI:73542"/>
        <dbReference type="ChEBI" id="CHEBI:74269"/>
        <dbReference type="EC" id="2.1.1.228"/>
    </reaction>
</comment>
<comment type="subunit">
    <text evidence="1">Homodimer.</text>
</comment>
<comment type="subcellular location">
    <subcellularLocation>
        <location evidence="1">Cytoplasm</location>
    </subcellularLocation>
</comment>
<comment type="similarity">
    <text evidence="1">Belongs to the RNA methyltransferase TrmD family.</text>
</comment>
<name>TRMD_PARC0</name>